<comment type="function">
    <text evidence="1 2 3">Part of a complex that catalyzes the reversible cleavage of acetyl-CoA, allowing growth on acetate as sole source of carbon and energy. The alpha-epsilon subcomponent functions as a carbon monoxide dehydrogenase (PubMed:6425262). The precise role of the epsilon subunit is unclear; it may have a stabilizing role within the alpha(2)epsilon(2) component and/or be involved in electron transfer to FAD during a potential FAD-mediated CO oxidation (PubMed:18621675).</text>
</comment>
<comment type="pathway">
    <text evidence="1 4">One-carbon metabolism; methanogenesis from acetate.</text>
</comment>
<comment type="subunit">
    <text evidence="1 2 3">Heterotetramer of two alpha and two epsilon subunits (PubMed:6425262). The ACDS complex is made up of alpha, epsilon, beta, gamma and delta subunits with a probable stoichiometry of (alpha(2)epsilon(2))(4)-beta(8)-(gamma(1)delta(1))(8) (By similarity).</text>
</comment>
<comment type="induction">
    <text evidence="2">Up-regulated during growth on acetate.</text>
</comment>
<comment type="similarity">
    <text evidence="1">Belongs to the CdhB family.</text>
</comment>
<proteinExistence type="evidence at protein level"/>
<protein>
    <recommendedName>
        <fullName evidence="1">Acetyl-CoA decarbonylase/synthase complex subunit epsilon 1</fullName>
        <shortName evidence="1">ACDS complex subunit epsilon 1</shortName>
    </recommendedName>
    <alternativeName>
        <fullName evidence="1">ACDS complex carbon monoxide dehydrogenase subunit epsilon 1</fullName>
        <shortName evidence="1">ACDS CODH subunit epsilon 1</shortName>
    </alternativeName>
</protein>
<reference key="1">
    <citation type="journal article" date="2006" name="J. Bacteriol.">
        <title>The Methanosarcina barkeri genome: comparative analysis with Methanosarcina acetivorans and Methanosarcina mazei reveals extensive rearrangement within methanosarcinal genomes.</title>
        <authorList>
            <person name="Maeder D.L."/>
            <person name="Anderson I."/>
            <person name="Brettin T.S."/>
            <person name="Bruce D.C."/>
            <person name="Gilna P."/>
            <person name="Han C.S."/>
            <person name="Lapidus A."/>
            <person name="Metcalf W.W."/>
            <person name="Saunders E."/>
            <person name="Tapia R."/>
            <person name="Sowers K.R."/>
        </authorList>
    </citation>
    <scope>NUCLEOTIDE SEQUENCE [LARGE SCALE GENOMIC DNA]</scope>
    <source>
        <strain>Fusaro / DSM 804</strain>
    </source>
</reference>
<reference key="2">
    <citation type="journal article" date="1984" name="J. Bacteriol.">
        <title>Characterization and purification of carbon monoxide dehydrogenase from Methanosarcina barkeri.</title>
        <authorList>
            <person name="Krzycki J.A."/>
            <person name="Zeikus J.G."/>
        </authorList>
    </citation>
    <scope>FUNCTION</scope>
    <scope>SUBUNIT</scope>
    <scope>INDUCTION</scope>
    <scope>PATHWAY</scope>
    <source>
        <strain>MS</strain>
    </source>
</reference>
<reference key="3">
    <citation type="journal article" date="2008" name="Proc. Natl. Acad. Sci. U.S.A.">
        <title>Structure of the alpha2epsilon2 Ni-dependent CO dehydrogenase component of the Methanosarcina barkeri acetyl-CoA decarbonylase/synthase complex.</title>
        <authorList>
            <person name="Gong W."/>
            <person name="Hao B."/>
            <person name="Wei Z."/>
            <person name="Ferguson D.J."/>
            <person name="Tallant T."/>
            <person name="Krzycki J.A."/>
            <person name="Chan M.K."/>
        </authorList>
    </citation>
    <scope>X-RAY CRYSTALLOGRAPHY (2.00 ANGSTROMS) IN COMPLEX WITH ACDS ALPHA SUBUNIT</scope>
    <scope>SUBUNIT</scope>
</reference>
<gene>
    <name evidence="1" type="primary">cdhB1</name>
    <name evidence="5" type="ordered locus">Mbar_A0203</name>
</gene>
<dbReference type="EMBL" id="CP000099">
    <property type="protein sequence ID" value="AAZ69187.1"/>
    <property type="molecule type" value="Genomic_DNA"/>
</dbReference>
<dbReference type="PDB" id="3CF4">
    <property type="method" value="X-ray"/>
    <property type="resolution" value="2.00 A"/>
    <property type="chains" value="G=1-170"/>
</dbReference>
<dbReference type="PDBsum" id="3CF4"/>
<dbReference type="SMR" id="Q46G05"/>
<dbReference type="STRING" id="269797.Mbar_A0203"/>
<dbReference type="PaxDb" id="269797-Mbar_A0203"/>
<dbReference type="KEGG" id="mba:Mbar_A0203"/>
<dbReference type="eggNOG" id="arCOG04408">
    <property type="taxonomic scope" value="Archaea"/>
</dbReference>
<dbReference type="HOGENOM" id="CLU_123700_0_0_2"/>
<dbReference type="OrthoDB" id="120588at2157"/>
<dbReference type="UniPathway" id="UPA00642"/>
<dbReference type="EvolutionaryTrace" id="Q46G05"/>
<dbReference type="GO" id="GO:0019385">
    <property type="term" value="P:methanogenesis, from acetate"/>
    <property type="evidence" value="ECO:0007669"/>
    <property type="project" value="UniProtKB-UniRule"/>
</dbReference>
<dbReference type="Gene3D" id="3.40.50.1220">
    <property type="entry name" value="TPP-binding domain"/>
    <property type="match status" value="1"/>
</dbReference>
<dbReference type="HAMAP" id="MF_01134">
    <property type="entry name" value="CdhB"/>
    <property type="match status" value="1"/>
</dbReference>
<dbReference type="InterPro" id="IPR003704">
    <property type="entry name" value="CdhB"/>
</dbReference>
<dbReference type="InterPro" id="IPR029035">
    <property type="entry name" value="DHS-like_NAD/FAD-binding_dom"/>
</dbReference>
<dbReference type="NCBIfam" id="TIGR00315">
    <property type="entry name" value="cdhB"/>
    <property type="match status" value="1"/>
</dbReference>
<dbReference type="Pfam" id="PF02552">
    <property type="entry name" value="CO_dh"/>
    <property type="match status" value="1"/>
</dbReference>
<dbReference type="PIRSF" id="PIRSF006035">
    <property type="entry name" value="CO_dh_b_ACDS_e"/>
    <property type="match status" value="1"/>
</dbReference>
<dbReference type="SUPFAM" id="SSF52467">
    <property type="entry name" value="DHS-like NAD/FAD-binding domain"/>
    <property type="match status" value="1"/>
</dbReference>
<name>ACDE1_METBF</name>
<evidence type="ECO:0000255" key="1">
    <source>
        <dbReference type="HAMAP-Rule" id="MF_01134"/>
    </source>
</evidence>
<evidence type="ECO:0000269" key="2">
    <source>
    </source>
</evidence>
<evidence type="ECO:0000305" key="3">
    <source>
    </source>
</evidence>
<evidence type="ECO:0000305" key="4">
    <source>
    </source>
</evidence>
<evidence type="ECO:0000312" key="5">
    <source>
        <dbReference type="EMBL" id="AAZ69187.1"/>
    </source>
</evidence>
<evidence type="ECO:0007829" key="6">
    <source>
        <dbReference type="PDB" id="3CF4"/>
    </source>
</evidence>
<sequence length="170" mass="18555">MVDTTKNTKLFTSYGVSTSRTVSPEMAAKLISKAKRPLLMVGTLTLEPEILDRVVKISKAANIPIAATGSSMASLVDKDVDAKYINAHMLGFYLTDPKWPGLDGNGNYDMVIAIGFKKYYINQVLSAAKNFSNLKTIAIERGYIQNATMSFGNLSKADYYAALDELINAL</sequence>
<feature type="chain" id="PRO_0000436852" description="Acetyl-CoA decarbonylase/synthase complex subunit epsilon 1">
    <location>
        <begin position="1"/>
        <end position="170"/>
    </location>
</feature>
<feature type="helix" evidence="6">
    <location>
        <begin position="24"/>
        <end position="33"/>
    </location>
</feature>
<feature type="strand" evidence="6">
    <location>
        <begin position="35"/>
        <end position="41"/>
    </location>
</feature>
<feature type="helix" evidence="6">
    <location>
        <begin position="48"/>
        <end position="61"/>
    </location>
</feature>
<feature type="strand" evidence="6">
    <location>
        <begin position="65"/>
        <end position="67"/>
    </location>
</feature>
<feature type="turn" evidence="6">
    <location>
        <begin position="69"/>
        <end position="71"/>
    </location>
</feature>
<feature type="helix" evidence="6">
    <location>
        <begin position="72"/>
        <end position="75"/>
    </location>
</feature>
<feature type="strand" evidence="6">
    <location>
        <begin position="78"/>
        <end position="80"/>
    </location>
</feature>
<feature type="strand" evidence="6">
    <location>
        <begin position="82"/>
        <end position="84"/>
    </location>
</feature>
<feature type="helix" evidence="6">
    <location>
        <begin position="87"/>
        <end position="93"/>
    </location>
</feature>
<feature type="strand" evidence="6">
    <location>
        <begin position="102"/>
        <end position="105"/>
    </location>
</feature>
<feature type="strand" evidence="6">
    <location>
        <begin position="109"/>
        <end position="115"/>
    </location>
</feature>
<feature type="helix" evidence="6">
    <location>
        <begin position="118"/>
        <end position="131"/>
    </location>
</feature>
<feature type="strand" evidence="6">
    <location>
        <begin position="136"/>
        <end position="138"/>
    </location>
</feature>
<feature type="strand" evidence="6">
    <location>
        <begin position="140"/>
        <end position="142"/>
    </location>
</feature>
<feature type="strand" evidence="6">
    <location>
        <begin position="147"/>
        <end position="150"/>
    </location>
</feature>
<feature type="helix" evidence="6">
    <location>
        <begin position="156"/>
        <end position="168"/>
    </location>
</feature>
<organism>
    <name type="scientific">Methanosarcina barkeri (strain Fusaro / DSM 804)</name>
    <dbReference type="NCBI Taxonomy" id="269797"/>
    <lineage>
        <taxon>Archaea</taxon>
        <taxon>Methanobacteriati</taxon>
        <taxon>Methanobacteriota</taxon>
        <taxon>Stenosarchaea group</taxon>
        <taxon>Methanomicrobia</taxon>
        <taxon>Methanosarcinales</taxon>
        <taxon>Methanosarcinaceae</taxon>
        <taxon>Methanosarcina</taxon>
    </lineage>
</organism>
<keyword id="KW-0002">3D-structure</keyword>
<keyword id="KW-0484">Methanogenesis</keyword>
<accession>Q46G05</accession>